<gene>
    <name evidence="1" type="primary">glpK</name>
    <name type="ordered locus">SARI_03571</name>
</gene>
<proteinExistence type="inferred from homology"/>
<feature type="chain" id="PRO_1000077426" description="Glycerol kinase">
    <location>
        <begin position="1"/>
        <end position="502"/>
    </location>
</feature>
<feature type="binding site" evidence="1">
    <location>
        <position position="14"/>
    </location>
    <ligand>
        <name>ADP</name>
        <dbReference type="ChEBI" id="CHEBI:456216"/>
    </ligand>
</feature>
<feature type="binding site" evidence="1">
    <location>
        <position position="14"/>
    </location>
    <ligand>
        <name>ATP</name>
        <dbReference type="ChEBI" id="CHEBI:30616"/>
    </ligand>
</feature>
<feature type="binding site" evidence="1">
    <location>
        <position position="14"/>
    </location>
    <ligand>
        <name>sn-glycerol 3-phosphate</name>
        <dbReference type="ChEBI" id="CHEBI:57597"/>
    </ligand>
</feature>
<feature type="binding site" evidence="1">
    <location>
        <position position="15"/>
    </location>
    <ligand>
        <name>ATP</name>
        <dbReference type="ChEBI" id="CHEBI:30616"/>
    </ligand>
</feature>
<feature type="binding site" evidence="1">
    <location>
        <position position="16"/>
    </location>
    <ligand>
        <name>ATP</name>
        <dbReference type="ChEBI" id="CHEBI:30616"/>
    </ligand>
</feature>
<feature type="binding site" evidence="1">
    <location>
        <position position="18"/>
    </location>
    <ligand>
        <name>ADP</name>
        <dbReference type="ChEBI" id="CHEBI:456216"/>
    </ligand>
</feature>
<feature type="binding site" evidence="1">
    <location>
        <position position="84"/>
    </location>
    <ligand>
        <name>glycerol</name>
        <dbReference type="ChEBI" id="CHEBI:17754"/>
    </ligand>
</feature>
<feature type="binding site" evidence="1">
    <location>
        <position position="84"/>
    </location>
    <ligand>
        <name>sn-glycerol 3-phosphate</name>
        <dbReference type="ChEBI" id="CHEBI:57597"/>
    </ligand>
</feature>
<feature type="binding site" evidence="1">
    <location>
        <position position="85"/>
    </location>
    <ligand>
        <name>glycerol</name>
        <dbReference type="ChEBI" id="CHEBI:17754"/>
    </ligand>
</feature>
<feature type="binding site" evidence="1">
    <location>
        <position position="85"/>
    </location>
    <ligand>
        <name>sn-glycerol 3-phosphate</name>
        <dbReference type="ChEBI" id="CHEBI:57597"/>
    </ligand>
</feature>
<feature type="binding site" evidence="1">
    <location>
        <position position="136"/>
    </location>
    <ligand>
        <name>glycerol</name>
        <dbReference type="ChEBI" id="CHEBI:17754"/>
    </ligand>
</feature>
<feature type="binding site" evidence="1">
    <location>
        <position position="136"/>
    </location>
    <ligand>
        <name>sn-glycerol 3-phosphate</name>
        <dbReference type="ChEBI" id="CHEBI:57597"/>
    </ligand>
</feature>
<feature type="binding site" evidence="1">
    <location>
        <position position="246"/>
    </location>
    <ligand>
        <name>glycerol</name>
        <dbReference type="ChEBI" id="CHEBI:17754"/>
    </ligand>
</feature>
<feature type="binding site" evidence="1">
    <location>
        <position position="246"/>
    </location>
    <ligand>
        <name>sn-glycerol 3-phosphate</name>
        <dbReference type="ChEBI" id="CHEBI:57597"/>
    </ligand>
</feature>
<feature type="binding site" evidence="1">
    <location>
        <position position="247"/>
    </location>
    <ligand>
        <name>glycerol</name>
        <dbReference type="ChEBI" id="CHEBI:17754"/>
    </ligand>
</feature>
<feature type="binding site" evidence="1">
    <location>
        <position position="268"/>
    </location>
    <ligand>
        <name>ADP</name>
        <dbReference type="ChEBI" id="CHEBI:456216"/>
    </ligand>
</feature>
<feature type="binding site" evidence="1">
    <location>
        <position position="268"/>
    </location>
    <ligand>
        <name>ATP</name>
        <dbReference type="ChEBI" id="CHEBI:30616"/>
    </ligand>
</feature>
<feature type="binding site" evidence="1">
    <location>
        <position position="311"/>
    </location>
    <ligand>
        <name>ADP</name>
        <dbReference type="ChEBI" id="CHEBI:456216"/>
    </ligand>
</feature>
<feature type="binding site" evidence="1">
    <location>
        <position position="311"/>
    </location>
    <ligand>
        <name>ATP</name>
        <dbReference type="ChEBI" id="CHEBI:30616"/>
    </ligand>
</feature>
<feature type="binding site" evidence="1">
    <location>
        <position position="315"/>
    </location>
    <ligand>
        <name>ATP</name>
        <dbReference type="ChEBI" id="CHEBI:30616"/>
    </ligand>
</feature>
<feature type="binding site" evidence="1">
    <location>
        <position position="412"/>
    </location>
    <ligand>
        <name>ADP</name>
        <dbReference type="ChEBI" id="CHEBI:456216"/>
    </ligand>
</feature>
<feature type="binding site" evidence="1">
    <location>
        <position position="412"/>
    </location>
    <ligand>
        <name>ATP</name>
        <dbReference type="ChEBI" id="CHEBI:30616"/>
    </ligand>
</feature>
<feature type="binding site" evidence="1">
    <location>
        <position position="416"/>
    </location>
    <ligand>
        <name>ADP</name>
        <dbReference type="ChEBI" id="CHEBI:456216"/>
    </ligand>
</feature>
<protein>
    <recommendedName>
        <fullName evidence="1">Glycerol kinase</fullName>
        <ecNumber evidence="1">2.7.1.30</ecNumber>
    </recommendedName>
    <alternativeName>
        <fullName evidence="1">ATP:glycerol 3-phosphotransferase</fullName>
    </alternativeName>
    <alternativeName>
        <fullName evidence="1">Glycerokinase</fullName>
        <shortName evidence="1">GK</shortName>
    </alternativeName>
</protein>
<name>GLPK_SALAR</name>
<accession>A9MI40</accession>
<comment type="function">
    <text evidence="1">Key enzyme in the regulation of glycerol uptake and metabolism. Catalyzes the phosphorylation of glycerol to yield sn-glycerol 3-phosphate.</text>
</comment>
<comment type="catalytic activity">
    <reaction evidence="1">
        <text>glycerol + ATP = sn-glycerol 3-phosphate + ADP + H(+)</text>
        <dbReference type="Rhea" id="RHEA:21644"/>
        <dbReference type="ChEBI" id="CHEBI:15378"/>
        <dbReference type="ChEBI" id="CHEBI:17754"/>
        <dbReference type="ChEBI" id="CHEBI:30616"/>
        <dbReference type="ChEBI" id="CHEBI:57597"/>
        <dbReference type="ChEBI" id="CHEBI:456216"/>
        <dbReference type="EC" id="2.7.1.30"/>
    </reaction>
</comment>
<comment type="activity regulation">
    <text evidence="1">Activity of this regulatory enzyme is affected by several metabolites. Allosterically and non-competitively inhibited by fructose 1,6-bisphosphate (FBP) and unphosphorylated phosphocarrier protein EIIA-Glc (III-Glc), an integral component of the bacterial phosphotransferase (PTS) system.</text>
</comment>
<comment type="pathway">
    <text evidence="1">Polyol metabolism; glycerol degradation via glycerol kinase pathway; sn-glycerol 3-phosphate from glycerol: step 1/1.</text>
</comment>
<comment type="subunit">
    <text evidence="1">Homotetramer and homodimer (in equilibrium). Heterodimer with EIIA-Glc. Binds 1 zinc ion per glycerol kinase EIIA-Glc dimer. The zinc ion is important for dimerization.</text>
</comment>
<comment type="similarity">
    <text evidence="1">Belongs to the FGGY kinase family.</text>
</comment>
<sequence>MTEKKYIVALDQGTTSSRAVVMDHDANIVSVSQREFEQIYPKPGWVEHDPMEIWASQSSTLVEVLAKADISSDQIAAIGITNQRETAIVWERETGKPIYNAIVWQCRRTADICEQLKRNGLEDYIRDNTGLVVDPYFSGTKVKWILDHVEGSRERAKRGELLFGTVDTWLIWKMTQGRVHVTDYTNASRTMLFNIHDLDWDEKMLDVLDIPRAMLPQVRKSSEVYGQTNIGGKGGTRIPIAGIAGDQQAALFGQLCVKEGMAKNTYGTGCFMLMNTGEKAVKSENGLLTTIACGPSGEVNYALEGAVFMAGASIQWLRDEMKLISDAFDSEYFATKVKDTNGVYVVPAFTGLGAPYWDPYARGAIFGLTRGVNSNHIIRATLESIAYQTRDVLEAMQADSGIRLHALRVDGGAVANNFLMQFQSDILGTRVERPEVREVTALGAAYLAGLAVGYWQNLDELQEKAVIEREFRPGIETTERNYRYSGWKKAVQRAMAWEEHDK</sequence>
<organism>
    <name type="scientific">Salmonella arizonae (strain ATCC BAA-731 / CDC346-86 / RSK2980)</name>
    <dbReference type="NCBI Taxonomy" id="41514"/>
    <lineage>
        <taxon>Bacteria</taxon>
        <taxon>Pseudomonadati</taxon>
        <taxon>Pseudomonadota</taxon>
        <taxon>Gammaproteobacteria</taxon>
        <taxon>Enterobacterales</taxon>
        <taxon>Enterobacteriaceae</taxon>
        <taxon>Salmonella</taxon>
    </lineage>
</organism>
<dbReference type="EC" id="2.7.1.30" evidence="1"/>
<dbReference type="EMBL" id="CP000880">
    <property type="protein sequence ID" value="ABX23386.1"/>
    <property type="molecule type" value="Genomic_DNA"/>
</dbReference>
<dbReference type="SMR" id="A9MI40"/>
<dbReference type="STRING" id="41514.SARI_03571"/>
<dbReference type="KEGG" id="ses:SARI_03571"/>
<dbReference type="HOGENOM" id="CLU_009281_2_3_6"/>
<dbReference type="UniPathway" id="UPA00618">
    <property type="reaction ID" value="UER00672"/>
</dbReference>
<dbReference type="Proteomes" id="UP000002084">
    <property type="component" value="Chromosome"/>
</dbReference>
<dbReference type="GO" id="GO:0005829">
    <property type="term" value="C:cytosol"/>
    <property type="evidence" value="ECO:0007669"/>
    <property type="project" value="TreeGrafter"/>
</dbReference>
<dbReference type="GO" id="GO:0005524">
    <property type="term" value="F:ATP binding"/>
    <property type="evidence" value="ECO:0007669"/>
    <property type="project" value="UniProtKB-UniRule"/>
</dbReference>
<dbReference type="GO" id="GO:0004370">
    <property type="term" value="F:glycerol kinase activity"/>
    <property type="evidence" value="ECO:0000250"/>
    <property type="project" value="UniProtKB"/>
</dbReference>
<dbReference type="GO" id="GO:0046872">
    <property type="term" value="F:metal ion binding"/>
    <property type="evidence" value="ECO:0007669"/>
    <property type="project" value="UniProtKB-KW"/>
</dbReference>
<dbReference type="GO" id="GO:0019563">
    <property type="term" value="P:glycerol catabolic process"/>
    <property type="evidence" value="ECO:0007669"/>
    <property type="project" value="UniProtKB-UniRule"/>
</dbReference>
<dbReference type="GO" id="GO:0006071">
    <property type="term" value="P:glycerol metabolic process"/>
    <property type="evidence" value="ECO:0000250"/>
    <property type="project" value="UniProtKB"/>
</dbReference>
<dbReference type="GO" id="GO:0006072">
    <property type="term" value="P:glycerol-3-phosphate metabolic process"/>
    <property type="evidence" value="ECO:0007669"/>
    <property type="project" value="InterPro"/>
</dbReference>
<dbReference type="CDD" id="cd07786">
    <property type="entry name" value="FGGY_EcGK_like"/>
    <property type="match status" value="1"/>
</dbReference>
<dbReference type="FunFam" id="3.30.420.40:FF:000007">
    <property type="entry name" value="Glycerol kinase"/>
    <property type="match status" value="1"/>
</dbReference>
<dbReference type="FunFam" id="3.30.420.40:FF:000008">
    <property type="entry name" value="Glycerol kinase"/>
    <property type="match status" value="1"/>
</dbReference>
<dbReference type="Gene3D" id="3.30.420.40">
    <property type="match status" value="2"/>
</dbReference>
<dbReference type="HAMAP" id="MF_00186">
    <property type="entry name" value="Glycerol_kin"/>
    <property type="match status" value="1"/>
</dbReference>
<dbReference type="InterPro" id="IPR043129">
    <property type="entry name" value="ATPase_NBD"/>
</dbReference>
<dbReference type="InterPro" id="IPR000577">
    <property type="entry name" value="Carb_kinase_FGGY"/>
</dbReference>
<dbReference type="InterPro" id="IPR018483">
    <property type="entry name" value="Carb_kinase_FGGY_CS"/>
</dbReference>
<dbReference type="InterPro" id="IPR018485">
    <property type="entry name" value="FGGY_C"/>
</dbReference>
<dbReference type="InterPro" id="IPR018484">
    <property type="entry name" value="FGGY_N"/>
</dbReference>
<dbReference type="InterPro" id="IPR005999">
    <property type="entry name" value="Glycerol_kin"/>
</dbReference>
<dbReference type="NCBIfam" id="TIGR01311">
    <property type="entry name" value="glycerol_kin"/>
    <property type="match status" value="1"/>
</dbReference>
<dbReference type="NCBIfam" id="NF000756">
    <property type="entry name" value="PRK00047.1"/>
    <property type="match status" value="1"/>
</dbReference>
<dbReference type="PANTHER" id="PTHR10196:SF69">
    <property type="entry name" value="GLYCEROL KINASE"/>
    <property type="match status" value="1"/>
</dbReference>
<dbReference type="PANTHER" id="PTHR10196">
    <property type="entry name" value="SUGAR KINASE"/>
    <property type="match status" value="1"/>
</dbReference>
<dbReference type="Pfam" id="PF02782">
    <property type="entry name" value="FGGY_C"/>
    <property type="match status" value="1"/>
</dbReference>
<dbReference type="Pfam" id="PF00370">
    <property type="entry name" value="FGGY_N"/>
    <property type="match status" value="1"/>
</dbReference>
<dbReference type="PIRSF" id="PIRSF000538">
    <property type="entry name" value="GlpK"/>
    <property type="match status" value="1"/>
</dbReference>
<dbReference type="SUPFAM" id="SSF53067">
    <property type="entry name" value="Actin-like ATPase domain"/>
    <property type="match status" value="2"/>
</dbReference>
<dbReference type="PROSITE" id="PS00933">
    <property type="entry name" value="FGGY_KINASES_1"/>
    <property type="match status" value="1"/>
</dbReference>
<dbReference type="PROSITE" id="PS00445">
    <property type="entry name" value="FGGY_KINASES_2"/>
    <property type="match status" value="1"/>
</dbReference>
<evidence type="ECO:0000255" key="1">
    <source>
        <dbReference type="HAMAP-Rule" id="MF_00186"/>
    </source>
</evidence>
<keyword id="KW-0021">Allosteric enzyme</keyword>
<keyword id="KW-0067">ATP-binding</keyword>
<keyword id="KW-0319">Glycerol metabolism</keyword>
<keyword id="KW-0418">Kinase</keyword>
<keyword id="KW-0479">Metal-binding</keyword>
<keyword id="KW-0547">Nucleotide-binding</keyword>
<keyword id="KW-1185">Reference proteome</keyword>
<keyword id="KW-0808">Transferase</keyword>
<keyword id="KW-0862">Zinc</keyword>
<reference key="1">
    <citation type="submission" date="2007-11" db="EMBL/GenBank/DDBJ databases">
        <authorList>
            <consortium name="The Salmonella enterica serovar Arizonae Genome Sequencing Project"/>
            <person name="McClelland M."/>
            <person name="Sanderson E.K."/>
            <person name="Porwollik S."/>
            <person name="Spieth J."/>
            <person name="Clifton W.S."/>
            <person name="Fulton R."/>
            <person name="Chunyan W."/>
            <person name="Wollam A."/>
            <person name="Shah N."/>
            <person name="Pepin K."/>
            <person name="Bhonagiri V."/>
            <person name="Nash W."/>
            <person name="Johnson M."/>
            <person name="Thiruvilangam P."/>
            <person name="Wilson R."/>
        </authorList>
    </citation>
    <scope>NUCLEOTIDE SEQUENCE [LARGE SCALE GENOMIC DNA]</scope>
    <source>
        <strain>ATCC BAA-731 / CDC346-86 / RSK2980</strain>
    </source>
</reference>